<evidence type="ECO:0000250" key="1"/>
<evidence type="ECO:0000255" key="2">
    <source>
        <dbReference type="HAMAP-Rule" id="MF_00248"/>
    </source>
</evidence>
<proteinExistence type="inferred from homology"/>
<protein>
    <recommendedName>
        <fullName evidence="2">ATP-dependent protease subunit HslV</fullName>
        <ecNumber evidence="2">3.4.25.2</ecNumber>
    </recommendedName>
    <alternativeName>
        <fullName>Protein LapC</fullName>
    </alternativeName>
</protein>
<reference key="1">
    <citation type="journal article" date="1993" name="Infect. Immun.">
        <title>Expression of the Pasteurella haemolytica leukotoxin is inhibited by a locus that encodes an ATP-binding cassette homolog.</title>
        <authorList>
            <person name="Highlander S.K."/>
            <person name="Wickersham E.A."/>
            <person name="Garza O."/>
            <person name="Weinstock G.M."/>
        </authorList>
    </citation>
    <scope>NUCLEOTIDE SEQUENCE [GENOMIC DNA]</scope>
    <source>
        <strain>Serotype A1 / PH101</strain>
    </source>
</reference>
<reference key="2">
    <citation type="journal article" date="1993" name="Infect. Immun.">
        <authorList>
            <person name="Highlander S.K."/>
            <person name="Wickersham E.A."/>
            <person name="Garza O."/>
            <person name="Weinstock G.M."/>
        </authorList>
    </citation>
    <scope>ERRATUM OF PUBMED:8359916</scope>
</reference>
<organism>
    <name type="scientific">Mannheimia haemolytica</name>
    <name type="common">Pasteurella haemolytica</name>
    <dbReference type="NCBI Taxonomy" id="75985"/>
    <lineage>
        <taxon>Bacteria</taxon>
        <taxon>Pseudomonadati</taxon>
        <taxon>Pseudomonadota</taxon>
        <taxon>Gammaproteobacteria</taxon>
        <taxon>Pasteurellales</taxon>
        <taxon>Pasteurellaceae</taxon>
        <taxon>Mannheimia</taxon>
    </lineage>
</organism>
<dbReference type="EC" id="3.4.25.2" evidence="2"/>
<dbReference type="EMBL" id="M59210">
    <property type="protein sequence ID" value="AAA25533.1"/>
    <property type="molecule type" value="Genomic_DNA"/>
</dbReference>
<dbReference type="RefSeq" id="WP_006248017.1">
    <property type="nucleotide sequence ID" value="NZ_VAJK01000035.1"/>
</dbReference>
<dbReference type="SMR" id="P49617"/>
<dbReference type="STRING" id="75985.WC39_13345"/>
<dbReference type="MEROPS" id="T01.006"/>
<dbReference type="GeneID" id="67370323"/>
<dbReference type="OrthoDB" id="9804884at2"/>
<dbReference type="GO" id="GO:0009376">
    <property type="term" value="C:HslUV protease complex"/>
    <property type="evidence" value="ECO:0007669"/>
    <property type="project" value="UniProtKB-UniRule"/>
</dbReference>
<dbReference type="GO" id="GO:0005839">
    <property type="term" value="C:proteasome core complex"/>
    <property type="evidence" value="ECO:0007669"/>
    <property type="project" value="InterPro"/>
</dbReference>
<dbReference type="GO" id="GO:0046872">
    <property type="term" value="F:metal ion binding"/>
    <property type="evidence" value="ECO:0007669"/>
    <property type="project" value="UniProtKB-KW"/>
</dbReference>
<dbReference type="GO" id="GO:0004298">
    <property type="term" value="F:threonine-type endopeptidase activity"/>
    <property type="evidence" value="ECO:0007669"/>
    <property type="project" value="UniProtKB-KW"/>
</dbReference>
<dbReference type="GO" id="GO:0051603">
    <property type="term" value="P:proteolysis involved in protein catabolic process"/>
    <property type="evidence" value="ECO:0007669"/>
    <property type="project" value="InterPro"/>
</dbReference>
<dbReference type="CDD" id="cd01913">
    <property type="entry name" value="protease_HslV"/>
    <property type="match status" value="1"/>
</dbReference>
<dbReference type="FunFam" id="3.60.20.10:FF:000002">
    <property type="entry name" value="ATP-dependent protease subunit HslV"/>
    <property type="match status" value="1"/>
</dbReference>
<dbReference type="Gene3D" id="3.60.20.10">
    <property type="entry name" value="Glutamine Phosphoribosylpyrophosphate, subunit 1, domain 1"/>
    <property type="match status" value="1"/>
</dbReference>
<dbReference type="HAMAP" id="MF_00248">
    <property type="entry name" value="HslV"/>
    <property type="match status" value="1"/>
</dbReference>
<dbReference type="InterPro" id="IPR022281">
    <property type="entry name" value="ATP-dep_Prtase_HsIV_su"/>
</dbReference>
<dbReference type="InterPro" id="IPR029055">
    <property type="entry name" value="Ntn_hydrolases_N"/>
</dbReference>
<dbReference type="InterPro" id="IPR001353">
    <property type="entry name" value="Proteasome_sua/b"/>
</dbReference>
<dbReference type="InterPro" id="IPR023333">
    <property type="entry name" value="Proteasome_suB-type"/>
</dbReference>
<dbReference type="NCBIfam" id="TIGR03692">
    <property type="entry name" value="ATP_dep_HslV"/>
    <property type="match status" value="1"/>
</dbReference>
<dbReference type="NCBIfam" id="NF003964">
    <property type="entry name" value="PRK05456.1"/>
    <property type="match status" value="1"/>
</dbReference>
<dbReference type="PANTHER" id="PTHR32194:SF0">
    <property type="entry name" value="ATP-DEPENDENT PROTEASE SUBUNIT HSLV"/>
    <property type="match status" value="1"/>
</dbReference>
<dbReference type="PANTHER" id="PTHR32194">
    <property type="entry name" value="METALLOPROTEASE TLDD"/>
    <property type="match status" value="1"/>
</dbReference>
<dbReference type="Pfam" id="PF00227">
    <property type="entry name" value="Proteasome"/>
    <property type="match status" value="1"/>
</dbReference>
<dbReference type="SUPFAM" id="SSF56235">
    <property type="entry name" value="N-terminal nucleophile aminohydrolases (Ntn hydrolases)"/>
    <property type="match status" value="1"/>
</dbReference>
<dbReference type="PROSITE" id="PS51476">
    <property type="entry name" value="PROTEASOME_BETA_2"/>
    <property type="match status" value="1"/>
</dbReference>
<sequence length="173" mass="18817">MTTIVCVRKDGKVAIGGDGQATLGNCIEKGTVRKVRRLYKDKVVTGFAGSTADAFILRDLFEKKLELHQGHLVKSAVELAKEWRTERALRRLEAMMIVANDSEFLLVSGSGDVIEPEQDVLAIGSGGNYAKAAALALLRTENNLSAKEIVAEALKIAGDIDIYSNYNHVIEEV</sequence>
<comment type="function">
    <text evidence="2">Protease subunit of a proteasome-like degradation complex believed to be a general protein degrading machinery.</text>
</comment>
<comment type="catalytic activity">
    <reaction evidence="2">
        <text>ATP-dependent cleavage of peptide bonds with broad specificity.</text>
        <dbReference type="EC" id="3.4.25.2"/>
    </reaction>
</comment>
<comment type="activity regulation">
    <text evidence="2">Allosterically activated by HslU binding.</text>
</comment>
<comment type="subunit">
    <text evidence="2">A double ring-shaped homohexamer of HslV is capped on each side by a ring-shaped HslU homohexamer. The assembly of the HslU/HslV complex is dependent on binding of ATP.</text>
</comment>
<comment type="subcellular location">
    <subcellularLocation>
        <location evidence="2">Cytoplasm</location>
    </subcellularLocation>
</comment>
<comment type="similarity">
    <text evidence="2">Belongs to the peptidase T1B family. HslV subfamily.</text>
</comment>
<gene>
    <name evidence="2" type="primary">hslV</name>
    <name type="synonym">lapC</name>
</gene>
<keyword id="KW-0021">Allosteric enzyme</keyword>
<keyword id="KW-0963">Cytoplasm</keyword>
<keyword id="KW-0378">Hydrolase</keyword>
<keyword id="KW-0479">Metal-binding</keyword>
<keyword id="KW-0645">Protease</keyword>
<keyword id="KW-0915">Sodium</keyword>
<keyword id="KW-0888">Threonine protease</keyword>
<accession>P49617</accession>
<feature type="initiator methionine" description="Removed" evidence="1">
    <location>
        <position position="1"/>
    </location>
</feature>
<feature type="chain" id="PRO_0000148128" description="ATP-dependent protease subunit HslV">
    <location>
        <begin position="2"/>
        <end position="173"/>
    </location>
</feature>
<feature type="active site" evidence="2">
    <location>
        <position position="2"/>
    </location>
</feature>
<feature type="binding site" evidence="2">
    <location>
        <position position="158"/>
    </location>
    <ligand>
        <name>Na(+)</name>
        <dbReference type="ChEBI" id="CHEBI:29101"/>
    </ligand>
</feature>
<feature type="binding site" evidence="2">
    <location>
        <position position="161"/>
    </location>
    <ligand>
        <name>Na(+)</name>
        <dbReference type="ChEBI" id="CHEBI:29101"/>
    </ligand>
</feature>
<feature type="binding site" evidence="2">
    <location>
        <position position="164"/>
    </location>
    <ligand>
        <name>Na(+)</name>
        <dbReference type="ChEBI" id="CHEBI:29101"/>
    </ligand>
</feature>
<name>HSLV_MANHA</name>